<accession>B4T119</accession>
<organism>
    <name type="scientific">Salmonella newport (strain SL254)</name>
    <dbReference type="NCBI Taxonomy" id="423368"/>
    <lineage>
        <taxon>Bacteria</taxon>
        <taxon>Pseudomonadati</taxon>
        <taxon>Pseudomonadota</taxon>
        <taxon>Gammaproteobacteria</taxon>
        <taxon>Enterobacterales</taxon>
        <taxon>Enterobacteriaceae</taxon>
        <taxon>Salmonella</taxon>
    </lineage>
</organism>
<gene>
    <name evidence="1" type="primary">aat</name>
    <name type="ordered locus">SNSL254_A0988</name>
</gene>
<reference key="1">
    <citation type="journal article" date="2011" name="J. Bacteriol.">
        <title>Comparative genomics of 28 Salmonella enterica isolates: evidence for CRISPR-mediated adaptive sublineage evolution.</title>
        <authorList>
            <person name="Fricke W.F."/>
            <person name="Mammel M.K."/>
            <person name="McDermott P.F."/>
            <person name="Tartera C."/>
            <person name="White D.G."/>
            <person name="Leclerc J.E."/>
            <person name="Ravel J."/>
            <person name="Cebula T.A."/>
        </authorList>
    </citation>
    <scope>NUCLEOTIDE SEQUENCE [LARGE SCALE GENOMIC DNA]</scope>
    <source>
        <strain>SL254</strain>
    </source>
</reference>
<proteinExistence type="inferred from homology"/>
<name>LFTR_SALNS</name>
<protein>
    <recommendedName>
        <fullName evidence="1">Leucyl/phenylalanyl-tRNA--protein transferase</fullName>
        <ecNumber evidence="1">2.3.2.6</ecNumber>
    </recommendedName>
    <alternativeName>
        <fullName evidence="1">L/F-transferase</fullName>
    </alternativeName>
    <alternativeName>
        <fullName evidence="1">Leucyltransferase</fullName>
    </alternativeName>
    <alternativeName>
        <fullName evidence="1">Phenyalanyltransferase</fullName>
    </alternativeName>
</protein>
<dbReference type="EC" id="2.3.2.6" evidence="1"/>
<dbReference type="EMBL" id="CP001113">
    <property type="protein sequence ID" value="ACF62206.1"/>
    <property type="molecule type" value="Genomic_DNA"/>
</dbReference>
<dbReference type="RefSeq" id="WP_001241649.1">
    <property type="nucleotide sequence ID" value="NZ_CCMR01000003.1"/>
</dbReference>
<dbReference type="SMR" id="B4T119"/>
<dbReference type="KEGG" id="see:SNSL254_A0988"/>
<dbReference type="HOGENOM" id="CLU_075045_0_0_6"/>
<dbReference type="Proteomes" id="UP000008824">
    <property type="component" value="Chromosome"/>
</dbReference>
<dbReference type="GO" id="GO:0005737">
    <property type="term" value="C:cytoplasm"/>
    <property type="evidence" value="ECO:0007669"/>
    <property type="project" value="UniProtKB-SubCell"/>
</dbReference>
<dbReference type="GO" id="GO:0008914">
    <property type="term" value="F:leucyl-tRNA--protein transferase activity"/>
    <property type="evidence" value="ECO:0007669"/>
    <property type="project" value="UniProtKB-UniRule"/>
</dbReference>
<dbReference type="GO" id="GO:0030163">
    <property type="term" value="P:protein catabolic process"/>
    <property type="evidence" value="ECO:0007669"/>
    <property type="project" value="UniProtKB-UniRule"/>
</dbReference>
<dbReference type="FunFam" id="3.30.70.3550:FF:000001">
    <property type="entry name" value="Leucyl/phenylalanyl-tRNA--protein transferase"/>
    <property type="match status" value="1"/>
</dbReference>
<dbReference type="FunFam" id="3.40.630.70:FF:000001">
    <property type="entry name" value="Leucyl/phenylalanyl-tRNA--protein transferase"/>
    <property type="match status" value="1"/>
</dbReference>
<dbReference type="Gene3D" id="3.40.630.70">
    <property type="entry name" value="Leucyl/phenylalanyl-tRNA-protein transferase, C-terminal domain"/>
    <property type="match status" value="1"/>
</dbReference>
<dbReference type="Gene3D" id="3.30.70.3550">
    <property type="entry name" value="Leucyl/phenylalanyl-tRNA-protein transferase, N-terminal domain"/>
    <property type="match status" value="1"/>
</dbReference>
<dbReference type="HAMAP" id="MF_00688">
    <property type="entry name" value="Leu_Phe_trans"/>
    <property type="match status" value="1"/>
</dbReference>
<dbReference type="InterPro" id="IPR016181">
    <property type="entry name" value="Acyl_CoA_acyltransferase"/>
</dbReference>
<dbReference type="InterPro" id="IPR004616">
    <property type="entry name" value="Leu/Phe-tRNA_Trfase"/>
</dbReference>
<dbReference type="InterPro" id="IPR042203">
    <property type="entry name" value="Leu/Phe-tRNA_Trfase_C"/>
</dbReference>
<dbReference type="InterPro" id="IPR042221">
    <property type="entry name" value="Leu/Phe-tRNA_Trfase_N"/>
</dbReference>
<dbReference type="NCBIfam" id="TIGR00667">
    <property type="entry name" value="aat"/>
    <property type="match status" value="1"/>
</dbReference>
<dbReference type="PANTHER" id="PTHR30098">
    <property type="entry name" value="LEUCYL/PHENYLALANYL-TRNA--PROTEIN TRANSFERASE"/>
    <property type="match status" value="1"/>
</dbReference>
<dbReference type="PANTHER" id="PTHR30098:SF2">
    <property type="entry name" value="LEUCYL_PHENYLALANYL-TRNA--PROTEIN TRANSFERASE"/>
    <property type="match status" value="1"/>
</dbReference>
<dbReference type="Pfam" id="PF03588">
    <property type="entry name" value="Leu_Phe_trans"/>
    <property type="match status" value="1"/>
</dbReference>
<dbReference type="SUPFAM" id="SSF55729">
    <property type="entry name" value="Acyl-CoA N-acyltransferases (Nat)"/>
    <property type="match status" value="1"/>
</dbReference>
<evidence type="ECO:0000255" key="1">
    <source>
        <dbReference type="HAMAP-Rule" id="MF_00688"/>
    </source>
</evidence>
<comment type="function">
    <text evidence="1">Functions in the N-end rule pathway of protein degradation where it conjugates Leu, Phe and, less efficiently, Met from aminoacyl-tRNAs to the N-termini of proteins containing an N-terminal arginine or lysine.</text>
</comment>
<comment type="catalytic activity">
    <reaction evidence="1">
        <text>N-terminal L-lysyl-[protein] + L-leucyl-tRNA(Leu) = N-terminal L-leucyl-L-lysyl-[protein] + tRNA(Leu) + H(+)</text>
        <dbReference type="Rhea" id="RHEA:12340"/>
        <dbReference type="Rhea" id="RHEA-COMP:9613"/>
        <dbReference type="Rhea" id="RHEA-COMP:9622"/>
        <dbReference type="Rhea" id="RHEA-COMP:12670"/>
        <dbReference type="Rhea" id="RHEA-COMP:12671"/>
        <dbReference type="ChEBI" id="CHEBI:15378"/>
        <dbReference type="ChEBI" id="CHEBI:65249"/>
        <dbReference type="ChEBI" id="CHEBI:78442"/>
        <dbReference type="ChEBI" id="CHEBI:78494"/>
        <dbReference type="ChEBI" id="CHEBI:133043"/>
        <dbReference type="EC" id="2.3.2.6"/>
    </reaction>
</comment>
<comment type="catalytic activity">
    <reaction evidence="1">
        <text>N-terminal L-arginyl-[protein] + L-leucyl-tRNA(Leu) = N-terminal L-leucyl-L-arginyl-[protein] + tRNA(Leu) + H(+)</text>
        <dbReference type="Rhea" id="RHEA:50416"/>
        <dbReference type="Rhea" id="RHEA-COMP:9613"/>
        <dbReference type="Rhea" id="RHEA-COMP:9622"/>
        <dbReference type="Rhea" id="RHEA-COMP:12672"/>
        <dbReference type="Rhea" id="RHEA-COMP:12673"/>
        <dbReference type="ChEBI" id="CHEBI:15378"/>
        <dbReference type="ChEBI" id="CHEBI:64719"/>
        <dbReference type="ChEBI" id="CHEBI:78442"/>
        <dbReference type="ChEBI" id="CHEBI:78494"/>
        <dbReference type="ChEBI" id="CHEBI:133044"/>
        <dbReference type="EC" id="2.3.2.6"/>
    </reaction>
</comment>
<comment type="catalytic activity">
    <reaction evidence="1">
        <text>L-phenylalanyl-tRNA(Phe) + an N-terminal L-alpha-aminoacyl-[protein] = an N-terminal L-phenylalanyl-L-alpha-aminoacyl-[protein] + tRNA(Phe)</text>
        <dbReference type="Rhea" id="RHEA:43632"/>
        <dbReference type="Rhea" id="RHEA-COMP:9668"/>
        <dbReference type="Rhea" id="RHEA-COMP:9699"/>
        <dbReference type="Rhea" id="RHEA-COMP:10636"/>
        <dbReference type="Rhea" id="RHEA-COMP:10637"/>
        <dbReference type="ChEBI" id="CHEBI:78442"/>
        <dbReference type="ChEBI" id="CHEBI:78531"/>
        <dbReference type="ChEBI" id="CHEBI:78597"/>
        <dbReference type="ChEBI" id="CHEBI:83561"/>
        <dbReference type="EC" id="2.3.2.6"/>
    </reaction>
</comment>
<comment type="subcellular location">
    <subcellularLocation>
        <location evidence="1">Cytoplasm</location>
    </subcellularLocation>
</comment>
<comment type="similarity">
    <text evidence="1">Belongs to the L/F-transferase family.</text>
</comment>
<keyword id="KW-0012">Acyltransferase</keyword>
<keyword id="KW-0963">Cytoplasm</keyword>
<keyword id="KW-0808">Transferase</keyword>
<sequence length="234" mass="26685">MRLVQLSRHSIAFPSPEGALREPNGLLALGGDLSPARLLMAYQHGIFPWFSPGDPILWWSPDPRAVLWPEKFHLSRSMKRFHNASPYRVTLNYAFDRVIDGCANHRDEGTWITRGIEEAYRRLHELGHAHSIEVWRDRELVGGMYGVSQGALFCGESMFSRQENASKTALLVFCAEFIRHGGKLIDCQVLNSHTASLGAIEIPRRDYLDHLAALRQQPLASRFWVPRTLFLPRK</sequence>
<feature type="chain" id="PRO_1000131949" description="Leucyl/phenylalanyl-tRNA--protein transferase">
    <location>
        <begin position="1"/>
        <end position="234"/>
    </location>
</feature>